<organism>
    <name type="scientific">Rattus norvegicus</name>
    <name type="common">Rat</name>
    <dbReference type="NCBI Taxonomy" id="10116"/>
    <lineage>
        <taxon>Eukaryota</taxon>
        <taxon>Metazoa</taxon>
        <taxon>Chordata</taxon>
        <taxon>Craniata</taxon>
        <taxon>Vertebrata</taxon>
        <taxon>Euteleostomi</taxon>
        <taxon>Mammalia</taxon>
        <taxon>Eutheria</taxon>
        <taxon>Euarchontoglires</taxon>
        <taxon>Glires</taxon>
        <taxon>Rodentia</taxon>
        <taxon>Myomorpha</taxon>
        <taxon>Muroidea</taxon>
        <taxon>Muridae</taxon>
        <taxon>Murinae</taxon>
        <taxon>Rattus</taxon>
    </lineage>
</organism>
<protein>
    <recommendedName>
        <fullName>Transient receptor potential cation channel subfamily V member 6</fullName>
        <shortName>TrpV6</shortName>
    </recommendedName>
    <alternativeName>
        <fullName evidence="11">Calcium transport protein 1</fullName>
        <shortName evidence="12">CaT1</shortName>
    </alternativeName>
    <alternativeName>
        <fullName>Epithelial calcium channel 2</fullName>
        <shortName>ECaC2</shortName>
    </alternativeName>
</protein>
<keyword id="KW-0002">3D-structure</keyword>
<keyword id="KW-0040">ANK repeat</keyword>
<keyword id="KW-0106">Calcium</keyword>
<keyword id="KW-0107">Calcium channel</keyword>
<keyword id="KW-0109">Calcium transport</keyword>
<keyword id="KW-0112">Calmodulin-binding</keyword>
<keyword id="KW-1003">Cell membrane</keyword>
<keyword id="KW-0325">Glycoprotein</keyword>
<keyword id="KW-0407">Ion channel</keyword>
<keyword id="KW-0406">Ion transport</keyword>
<keyword id="KW-0472">Membrane</keyword>
<keyword id="KW-0479">Metal-binding</keyword>
<keyword id="KW-0597">Phosphoprotein</keyword>
<keyword id="KW-1185">Reference proteome</keyword>
<keyword id="KW-0677">Repeat</keyword>
<keyword id="KW-0812">Transmembrane</keyword>
<keyword id="KW-1133">Transmembrane helix</keyword>
<keyword id="KW-0813">Transport</keyword>
<feature type="chain" id="PRO_0000215356" description="Transient receptor potential cation channel subfamily V member 6">
    <location>
        <begin position="1"/>
        <end position="767"/>
    </location>
</feature>
<feature type="topological domain" description="Cytoplasmic" evidence="8 9">
    <location>
        <begin position="1"/>
        <end position="366"/>
    </location>
</feature>
<feature type="transmembrane region" description="Helical" evidence="8 9">
    <location>
        <begin position="367"/>
        <end position="387"/>
    </location>
</feature>
<feature type="topological domain" description="Extracellular" evidence="8 9">
    <location>
        <begin position="388"/>
        <end position="424"/>
    </location>
</feature>
<feature type="transmembrane region" description="Helical" evidence="8 9">
    <location>
        <begin position="425"/>
        <end position="447"/>
    </location>
</feature>
<feature type="topological domain" description="Cytoplasmic" evidence="8 9">
    <location>
        <begin position="448"/>
        <end position="462"/>
    </location>
</feature>
<feature type="transmembrane region" description="Helical" evidence="8 9">
    <location>
        <begin position="463"/>
        <end position="482"/>
    </location>
</feature>
<feature type="topological domain" description="Extracellular" evidence="8 9">
    <location>
        <begin position="483"/>
        <end position="488"/>
    </location>
</feature>
<feature type="transmembrane region" description="Helical" evidence="8 9">
    <location>
        <begin position="489"/>
        <end position="508"/>
    </location>
</feature>
<feature type="topological domain" description="Cytoplasmic" evidence="8 9">
    <location>
        <begin position="509"/>
        <end position="528"/>
    </location>
</feature>
<feature type="transmembrane region" description="Helical" evidence="8 9">
    <location>
        <begin position="529"/>
        <end position="551"/>
    </location>
</feature>
<feature type="topological domain" description="Extracellular" evidence="8 9">
    <location>
        <begin position="552"/>
        <end position="564"/>
    </location>
</feature>
<feature type="intramembrane region" description="Pore-forming" evidence="8 9">
    <location>
        <begin position="565"/>
        <end position="584"/>
    </location>
</feature>
<feature type="topological domain" description="Extracellular" evidence="8 9">
    <location>
        <begin position="585"/>
        <end position="595"/>
    </location>
</feature>
<feature type="transmembrane region" description="Helical" evidence="8 9">
    <location>
        <begin position="596"/>
        <end position="616"/>
    </location>
</feature>
<feature type="topological domain" description="Cytoplasmic" evidence="8 9">
    <location>
        <begin position="617"/>
        <end position="767"/>
    </location>
</feature>
<feature type="repeat" description="ANK 1" evidence="3">
    <location>
        <begin position="84"/>
        <end position="114"/>
    </location>
</feature>
<feature type="repeat" description="ANK 2" evidence="3">
    <location>
        <begin position="118"/>
        <end position="147"/>
    </location>
</feature>
<feature type="repeat" description="ANK 3" evidence="3">
    <location>
        <begin position="156"/>
        <end position="185"/>
    </location>
</feature>
<feature type="repeat" description="ANK 4" evidence="3">
    <location>
        <begin position="202"/>
        <end position="231"/>
    </location>
</feature>
<feature type="repeat" description="ANK 5" evidence="3">
    <location>
        <begin position="235"/>
        <end position="276"/>
    </location>
</feature>
<feature type="repeat" description="ANK 6" evidence="3">
    <location>
        <begin position="278"/>
        <end position="307"/>
    </location>
</feature>
<feature type="region of interest" description="Disordered" evidence="4">
    <location>
        <begin position="1"/>
        <end position="33"/>
    </location>
</feature>
<feature type="region of interest" description="Interaction with calmodulin" evidence="1">
    <location>
        <begin position="133"/>
        <end position="143"/>
    </location>
</feature>
<feature type="region of interest" description="Interaction with S100A10" evidence="1">
    <location>
        <begin position="637"/>
        <end position="641"/>
    </location>
</feature>
<feature type="region of interest" description="Interaction with calmodulin" evidence="1">
    <location>
        <begin position="689"/>
        <end position="707"/>
    </location>
</feature>
<feature type="short sequence motif" description="Selectivity filter" evidence="8">
    <location>
        <begin position="580"/>
        <end position="584"/>
    </location>
</feature>
<feature type="binding site" evidence="8 14 15">
    <location>
        <position position="581"/>
    </location>
    <ligand>
        <name>Ca(2+)</name>
        <dbReference type="ChEBI" id="CHEBI:29108"/>
        <note>ligand shared between two neighboring subunits</note>
    </ligand>
</feature>
<feature type="modified residue" description="Phosphotyrosine; by SRC" evidence="7">
    <location>
        <position position="201"/>
    </location>
</feature>
<feature type="modified residue" description="Phosphotyrosine; by SRC" evidence="7">
    <location>
        <position position="202"/>
    </location>
</feature>
<feature type="glycosylation site" description="N-linked (GlcNAc...) asparagine" evidence="3">
    <location>
        <position position="397"/>
    </location>
</feature>
<feature type="mutagenesis site" description="Prevents up-regulation of the channel by phosphorylation; when associated with F-202." evidence="7">
    <original>Y</original>
    <variation>F</variation>
    <location>
        <position position="201"/>
    </location>
</feature>
<feature type="mutagenesis site" description="Prevents up-regulation of the channel by phosphorylation; when associated with F-201." evidence="7">
    <original>Y</original>
    <variation>F</variation>
    <location>
        <position position="202"/>
    </location>
</feature>
<feature type="mutagenesis site" description="Alters subunit assembly via domain swapping and reduces channel activity." evidence="9">
    <original>L</original>
    <variation>Q</variation>
    <location>
        <position position="535"/>
    </location>
</feature>
<feature type="helix" evidence="26">
    <location>
        <begin position="70"/>
        <end position="86"/>
    </location>
</feature>
<feature type="helix" evidence="26">
    <location>
        <begin position="88"/>
        <end position="94"/>
    </location>
</feature>
<feature type="helix" evidence="26">
    <location>
        <begin position="98"/>
        <end position="105"/>
    </location>
</feature>
<feature type="turn" evidence="27">
    <location>
        <begin position="106"/>
        <end position="108"/>
    </location>
</feature>
<feature type="helix" evidence="26">
    <location>
        <begin position="122"/>
        <end position="128"/>
    </location>
</feature>
<feature type="helix" evidence="26">
    <location>
        <begin position="132"/>
        <end position="141"/>
    </location>
</feature>
<feature type="helix" evidence="26">
    <location>
        <begin position="143"/>
        <end position="146"/>
    </location>
</feature>
<feature type="turn" evidence="26">
    <location>
        <begin position="154"/>
        <end position="157"/>
    </location>
</feature>
<feature type="helix" evidence="26">
    <location>
        <begin position="160"/>
        <end position="166"/>
    </location>
</feature>
<feature type="helix" evidence="26">
    <location>
        <begin position="170"/>
        <end position="178"/>
    </location>
</feature>
<feature type="helix" evidence="26">
    <location>
        <begin position="190"/>
        <end position="192"/>
    </location>
</feature>
<feature type="helix" evidence="26">
    <location>
        <begin position="206"/>
        <end position="212"/>
    </location>
</feature>
<feature type="helix" evidence="26">
    <location>
        <begin position="216"/>
        <end position="224"/>
    </location>
</feature>
<feature type="helix" evidence="26">
    <location>
        <begin position="239"/>
        <end position="244"/>
    </location>
</feature>
<feature type="helix" evidence="26">
    <location>
        <begin position="249"/>
        <end position="261"/>
    </location>
</feature>
<feature type="strand" evidence="26">
    <location>
        <begin position="267"/>
        <end position="269"/>
    </location>
</feature>
<feature type="turn" evidence="26">
    <location>
        <begin position="271"/>
        <end position="273"/>
    </location>
</feature>
<feature type="helix" evidence="26">
    <location>
        <begin position="282"/>
        <end position="289"/>
    </location>
</feature>
<feature type="helix" evidence="26">
    <location>
        <begin position="292"/>
        <end position="300"/>
    </location>
</feature>
<feature type="strand" evidence="26">
    <location>
        <begin position="303"/>
        <end position="309"/>
    </location>
</feature>
<feature type="strand" evidence="26">
    <location>
        <begin position="312"/>
        <end position="317"/>
    </location>
</feature>
<feature type="turn" evidence="26">
    <location>
        <begin position="320"/>
        <end position="322"/>
    </location>
</feature>
<feature type="strand" evidence="27">
    <location>
        <begin position="323"/>
        <end position="326"/>
    </location>
</feature>
<feature type="turn" evidence="26">
    <location>
        <begin position="327"/>
        <end position="329"/>
    </location>
</feature>
<feature type="helix" evidence="26">
    <location>
        <begin position="331"/>
        <end position="337"/>
    </location>
</feature>
<feature type="helix" evidence="26">
    <location>
        <begin position="341"/>
        <end position="346"/>
    </location>
</feature>
<feature type="helix" evidence="26">
    <location>
        <begin position="352"/>
        <end position="361"/>
    </location>
</feature>
<feature type="turn" evidence="26">
    <location>
        <begin position="362"/>
        <end position="364"/>
    </location>
</feature>
<feature type="helix" evidence="26">
    <location>
        <begin position="365"/>
        <end position="387"/>
    </location>
</feature>
<feature type="helix" evidence="24">
    <location>
        <begin position="397"/>
        <end position="399"/>
    </location>
</feature>
<feature type="turn" evidence="26">
    <location>
        <begin position="401"/>
        <end position="404"/>
    </location>
</feature>
<feature type="turn" evidence="25">
    <location>
        <begin position="418"/>
        <end position="420"/>
    </location>
</feature>
<feature type="helix" evidence="26">
    <location>
        <begin position="421"/>
        <end position="442"/>
    </location>
</feature>
<feature type="helix" evidence="28">
    <location>
        <begin position="443"/>
        <end position="445"/>
    </location>
</feature>
<feature type="turn" evidence="28">
    <location>
        <begin position="453"/>
        <end position="457"/>
    </location>
</feature>
<feature type="helix" evidence="26">
    <location>
        <begin position="463"/>
        <end position="481"/>
    </location>
</feature>
<feature type="turn" evidence="26">
    <location>
        <begin position="482"/>
        <end position="484"/>
    </location>
</feature>
<feature type="helix" evidence="24">
    <location>
        <begin position="487"/>
        <end position="489"/>
    </location>
</feature>
<feature type="helix" evidence="26">
    <location>
        <begin position="490"/>
        <end position="501"/>
    </location>
</feature>
<feature type="helix" evidence="26">
    <location>
        <begin position="504"/>
        <end position="510"/>
    </location>
</feature>
<feature type="turn" evidence="28">
    <location>
        <begin position="511"/>
        <end position="514"/>
    </location>
</feature>
<feature type="helix" evidence="26">
    <location>
        <begin position="515"/>
        <end position="530"/>
    </location>
</feature>
<feature type="helix" evidence="26">
    <location>
        <begin position="533"/>
        <end position="552"/>
    </location>
</feature>
<feature type="turn" evidence="26">
    <location>
        <begin position="556"/>
        <end position="558"/>
    </location>
</feature>
<feature type="helix" evidence="26">
    <location>
        <begin position="565"/>
        <end position="576"/>
    </location>
</feature>
<feature type="strand" evidence="26">
    <location>
        <begin position="586"/>
        <end position="588"/>
    </location>
</feature>
<feature type="helix" evidence="26">
    <location>
        <begin position="592"/>
        <end position="613"/>
    </location>
</feature>
<feature type="turn" evidence="26">
    <location>
        <begin position="614"/>
        <end position="617"/>
    </location>
</feature>
<feature type="turn" evidence="24">
    <location>
        <begin position="618"/>
        <end position="620"/>
    </location>
</feature>
<feature type="helix" evidence="26">
    <location>
        <begin position="622"/>
        <end position="646"/>
    </location>
</feature>
<feature type="strand" evidence="25">
    <location>
        <begin position="649"/>
        <end position="652"/>
    </location>
</feature>
<feature type="strand" evidence="26">
    <location>
        <begin position="655"/>
        <end position="659"/>
    </location>
</feature>
<feature type="strand" evidence="26">
    <location>
        <begin position="662"/>
        <end position="664"/>
    </location>
</feature>
<feature type="strand" evidence="26">
    <location>
        <begin position="668"/>
        <end position="675"/>
    </location>
</feature>
<accession>Q9R186</accession>
<reference key="1">
    <citation type="journal article" date="1999" name="J. Biol. Chem.">
        <title>Molecular cloning and characterization of a channel-like transporter mediating intestinal calcium absorption.</title>
        <authorList>
            <person name="Peng J.-B."/>
            <person name="Chen X.Z."/>
            <person name="Berger U.V."/>
            <person name="Vassilev P.M."/>
            <person name="Tsukaguchi H."/>
            <person name="Brown E.M."/>
            <person name="Hediger M.A."/>
        </authorList>
    </citation>
    <scope>NUCLEOTIDE SEQUENCE [MRNA]</scope>
    <scope>FUNCTION</scope>
    <scope>SUBCELLULAR LOCATION</scope>
    <scope>TISSUE SPECIFICITY</scope>
    <scope>TRANSPORTER ACTIVITY</scope>
    <source>
        <strain>Wistar</strain>
        <tissue>Intestine</tissue>
    </source>
</reference>
<reference key="2">
    <citation type="journal article" date="2001" name="Nature">
        <title>CaT1 manifests the pore properties of the calcium-release-activated calcium channel.</title>
        <authorList>
            <person name="Yue L."/>
            <person name="Peng J.B."/>
            <person name="Hediger M.A."/>
            <person name="Clapham D.E."/>
        </authorList>
    </citation>
    <scope>FUNCTION</scope>
    <scope>SUBCELLULAR LOCATION</scope>
    <scope>TRANSPORTER ACTIVITY</scope>
</reference>
<reference key="3">
    <citation type="journal article" date="2007" name="Cell Calcium">
        <title>Identification of tyrosines in the putative regulatory site of the Ca2+ channel TRPV6.</title>
        <authorList>
            <person name="Sternfeld L."/>
            <person name="Anderie I."/>
            <person name="Schmid A."/>
            <person name="Al-Shaldi H."/>
            <person name="Krause E."/>
            <person name="Magg T."/>
            <person name="Schreiner D."/>
            <person name="Hofer H.W."/>
            <person name="Schulz I."/>
        </authorList>
    </citation>
    <scope>PHOSPHORYLATION AT TYR-201 AND TYR-202</scope>
    <scope>MUTAGENESIS OF TYR-201 AND TYR-202</scope>
</reference>
<reference evidence="14 15 16 17" key="4">
    <citation type="journal article" date="2016" name="Nature">
        <title>Crystal structure of the epithelial calcium channel TRPV6.</title>
        <authorList>
            <person name="Saotome K."/>
            <person name="Singh A.K."/>
            <person name="Yelshanskaya M.V."/>
            <person name="Sobolevsky A.I."/>
        </authorList>
    </citation>
    <scope>X-RAY CRYSTALLOGRAPHY (3.25 ANGSTROMS) OF 41-709</scope>
    <scope>FUNCTION</scope>
    <scope>SUBUNIT</scope>
    <scope>SUBCELLULAR LOCATION</scope>
    <scope>TOPOLOGY</scope>
    <scope>REPEATS</scope>
    <scope>TRANSPORTER ACTIVITY</scope>
</reference>
<reference evidence="23" key="5">
    <citation type="journal article" date="2018" name="Nature">
        <title>Opening of the human epithelial calcium channel TRPV6.</title>
        <authorList>
            <person name="McGoldrick L.L."/>
            <person name="Singh A.K."/>
            <person name="Saotome K."/>
            <person name="Yelshanskaya M.V."/>
            <person name="Twomey E.C."/>
            <person name="Grassucci R.A."/>
            <person name="Sobolevsky A.I."/>
        </authorList>
    </citation>
    <scope>STRUCTURE BY ELECTRON MICROSCOPY (3.90 ANGSTROMS) OF 41-708</scope>
    <scope>SUBUNIT</scope>
    <scope>SUBCELLULAR LOCATION</scope>
    <scope>TOPOLOGY</scope>
</reference>
<reference evidence="18 19 20 21 22" key="6">
    <citation type="journal article" date="2017" name="Sci. Rep.">
        <title>Swapping of transmembrane domains in the epithelial calcium channel TRPV6.</title>
        <authorList>
            <person name="Singh A.K."/>
            <person name="Saotome K."/>
            <person name="Sobolevsky A.I."/>
        </authorList>
    </citation>
    <scope>X-RAY CRYSTALLOGRAPHY (3.25 ANGSTROMS) OF 41-709 OF WILD-TYPE AND MUTANT GLN-495</scope>
    <scope>FUNCTION</scope>
    <scope>SUBCELLULAR LOCATION</scope>
    <scope>SUBUNIT</scope>
    <scope>TOPOLOGY</scope>
    <scope>MUTAGENESIS OF LEU-535</scope>
    <scope>TRANSPORTER ACTIVITY</scope>
</reference>
<comment type="function">
    <text evidence="1 2 5 6 8 9">Calcium selective cation channel that mediates Ca(2+) uptake in various tissues, including the intestine (PubMed:10428857, PubMed:11287959, PubMed:27296226, PubMed:28878326). Important for normal Ca(2+) ion homeostasis in the body, including bone and skin (By similarity). The channel is activated by low internal calcium level, probably including intracellular calcium store depletion, and the current exhibits an inward rectification (PubMed:10428857, PubMed:11287959, PubMed:27296226). Inactivation includes both a rapid Ca(2+)-dependent and a slower Ca(2+)-calmodulin-dependent mechanism; the latter may be regulated by phosphorylation. In vitro, is slowly inhibited by Mg(2+) in a voltage-independent manner. Heteromeric assembly with TRPV5 seems to modify channel properties. TRPV5-TRPV6 heteromultimeric concatemers exhibit voltage-dependent gating (By similarity).</text>
</comment>
<comment type="catalytic activity">
    <reaction evidence="5 6 8 9">
        <text>Ca(2+)(in) = Ca(2+)(out)</text>
        <dbReference type="Rhea" id="RHEA:29671"/>
        <dbReference type="ChEBI" id="CHEBI:29108"/>
    </reaction>
</comment>
<comment type="subunit">
    <text evidence="2 8 9 10">Homotetramer (PubMed:27296226, PubMed:28878326, PubMed:29258289). Probably also forms heterotetramers with TRPV5. Interacts with TRPV5. Interacts with S100A10 and probably with the ANAX2-S100A10 heterotetramer. The interaction with S100A10 is required for the trafficking to the plasma membrane. Interacts with calmodulin. Interacts with BSPRY. Interacts with TCAF1 and TCAF2 (By similarity).</text>
</comment>
<comment type="interaction">
    <interactant intactId="EBI-7198720">
        <id>Q9R186</id>
    </interactant>
    <interactant intactId="EBI-7198720">
        <id>Q9R186</id>
        <label>Trpv6</label>
    </interactant>
    <organismsDiffer>false</organismsDiffer>
    <experiments>3</experiments>
</comment>
<comment type="subcellular location">
    <subcellularLocation>
        <location evidence="5 7 8 9 10">Cell membrane</location>
        <topology evidence="8 9 10">Multi-pass membrane protein</topology>
    </subcellularLocation>
</comment>
<comment type="tissue specificity">
    <text evidence="5">Expressed in duodenum, proximal jejunum, cecum, and colon.</text>
</comment>
<comment type="PTM">
    <text evidence="1 2">Glycosylated.</text>
</comment>
<comment type="PTM">
    <text evidence="7">Phosphorylation at Tyr-201 and Tyr-202 by SRC leads to an increased calcium influx through the channel. Probably dephosphorylated at these sites by PTPN1.</text>
</comment>
<comment type="similarity">
    <text evidence="13">Belongs to the transient receptor (TC 1.A.4) family. TrpV subfamily. TRPV6 sub-subfamily.</text>
</comment>
<comment type="caution">
    <text evidence="1 2">It is uncertain whether Met-1 or Met-41 is the initiator. In human and mouse, initiation starts at a conserved non-canonical ACG threonine codon decoded as Met-1 upstream of the canonical initiation at Met-41.</text>
</comment>
<comment type="sequence caution" evidence="2">
    <conflict type="miscellaneous discrepancy">
        <sequence resource="EMBL-CDS" id="AAD47636"/>
    </conflict>
    <text>Unusual initiator. The initiator methionine is coded by a non-canonical ACG threonine codon.</text>
</comment>
<name>TRPV6_RAT</name>
<proteinExistence type="evidence at protein level"/>
<dbReference type="EMBL" id="AF160798">
    <property type="protein sequence ID" value="AAD47636.1"/>
    <property type="status" value="ALT_SEQ"/>
    <property type="molecule type" value="mRNA"/>
</dbReference>
<dbReference type="RefSeq" id="NP_446138.1">
    <property type="nucleotide sequence ID" value="NM_053686.1"/>
</dbReference>
<dbReference type="PDB" id="5IWK">
    <property type="method" value="X-ray"/>
    <property type="resolution" value="3.25 A"/>
    <property type="chains" value="A=41-709"/>
</dbReference>
<dbReference type="PDB" id="5IWP">
    <property type="method" value="X-ray"/>
    <property type="resolution" value="3.65 A"/>
    <property type="chains" value="A=41-709"/>
</dbReference>
<dbReference type="PDB" id="5IWR">
    <property type="method" value="X-ray"/>
    <property type="resolution" value="3.85 A"/>
    <property type="chains" value="A=41-709"/>
</dbReference>
<dbReference type="PDB" id="5IWT">
    <property type="method" value="X-ray"/>
    <property type="resolution" value="3.80 A"/>
    <property type="chains" value="A=41-709"/>
</dbReference>
<dbReference type="PDB" id="5WO6">
    <property type="method" value="X-ray"/>
    <property type="resolution" value="3.31 A"/>
    <property type="chains" value="A=41-708"/>
</dbReference>
<dbReference type="PDB" id="5WO7">
    <property type="method" value="X-ray"/>
    <property type="resolution" value="3.25 A"/>
    <property type="chains" value="A=41-709"/>
</dbReference>
<dbReference type="PDB" id="5WO8">
    <property type="method" value="X-ray"/>
    <property type="resolution" value="3.40 A"/>
    <property type="chains" value="A=41-709"/>
</dbReference>
<dbReference type="PDB" id="5WO9">
    <property type="method" value="X-ray"/>
    <property type="resolution" value="3.70 A"/>
    <property type="chains" value="A=41-709"/>
</dbReference>
<dbReference type="PDB" id="5WOA">
    <property type="method" value="X-ray"/>
    <property type="resolution" value="3.90 A"/>
    <property type="chains" value="A=41-709"/>
</dbReference>
<dbReference type="PDB" id="6BOB">
    <property type="method" value="EM"/>
    <property type="resolution" value="3.90 A"/>
    <property type="chains" value="A/B/C/D=41-708"/>
</dbReference>
<dbReference type="PDB" id="6D7O">
    <property type="method" value="X-ray"/>
    <property type="resolution" value="3.45 A"/>
    <property type="chains" value="A=41-709"/>
</dbReference>
<dbReference type="PDB" id="6D7P">
    <property type="method" value="X-ray"/>
    <property type="resolution" value="3.37 A"/>
    <property type="chains" value="A=41-709"/>
</dbReference>
<dbReference type="PDB" id="6D7Q">
    <property type="method" value="X-ray"/>
    <property type="resolution" value="3.50 A"/>
    <property type="chains" value="A=41-709"/>
</dbReference>
<dbReference type="PDB" id="6D7V">
    <property type="method" value="X-ray"/>
    <property type="resolution" value="4.30 A"/>
    <property type="chains" value="A=41-709"/>
</dbReference>
<dbReference type="PDB" id="6D7X">
    <property type="method" value="X-ray"/>
    <property type="resolution" value="3.60 A"/>
    <property type="chains" value="A=41-709"/>
</dbReference>
<dbReference type="PDB" id="6E2G">
    <property type="method" value="EM"/>
    <property type="resolution" value="3.60 A"/>
    <property type="chains" value="A/B/C/D=41-767"/>
</dbReference>
<dbReference type="PDB" id="7D2K">
    <property type="method" value="X-ray"/>
    <property type="resolution" value="3.70 A"/>
    <property type="chains" value="A=41-709"/>
</dbReference>
<dbReference type="PDBsum" id="5IWK"/>
<dbReference type="PDBsum" id="5IWP"/>
<dbReference type="PDBsum" id="5IWR"/>
<dbReference type="PDBsum" id="5IWT"/>
<dbReference type="PDBsum" id="5WO6"/>
<dbReference type="PDBsum" id="5WO7"/>
<dbReference type="PDBsum" id="5WO8"/>
<dbReference type="PDBsum" id="5WO9"/>
<dbReference type="PDBsum" id="5WOA"/>
<dbReference type="PDBsum" id="6BOB"/>
<dbReference type="PDBsum" id="6D7O"/>
<dbReference type="PDBsum" id="6D7P"/>
<dbReference type="PDBsum" id="6D7Q"/>
<dbReference type="PDBsum" id="6D7V"/>
<dbReference type="PDBsum" id="6D7X"/>
<dbReference type="PDBsum" id="6E2G"/>
<dbReference type="PDBsum" id="7D2K"/>
<dbReference type="EMDB" id="EMD-7123"/>
<dbReference type="EMDB" id="EMD-8962"/>
<dbReference type="SMR" id="Q9R186"/>
<dbReference type="DIP" id="DIP-47769N"/>
<dbReference type="FunCoup" id="Q9R186">
    <property type="interactions" value="12"/>
</dbReference>
<dbReference type="IntAct" id="Q9R186">
    <property type="interactions" value="1"/>
</dbReference>
<dbReference type="MINT" id="Q9R186"/>
<dbReference type="STRING" id="10116.ENSRNOP00000020616"/>
<dbReference type="TCDB" id="1.A.4.2.7">
    <property type="family name" value="the transient receptor potential ca2+/cation channel (trp-cc) family"/>
</dbReference>
<dbReference type="GlyCosmos" id="Q9R186">
    <property type="glycosylation" value="1 site, No reported glycans"/>
</dbReference>
<dbReference type="GlyGen" id="Q9R186">
    <property type="glycosylation" value="2 sites"/>
</dbReference>
<dbReference type="iPTMnet" id="Q9R186"/>
<dbReference type="PhosphoSitePlus" id="Q9R186"/>
<dbReference type="PaxDb" id="10116-ENSRNOP00000020616"/>
<dbReference type="GeneID" id="114246"/>
<dbReference type="KEGG" id="rno:114246"/>
<dbReference type="UCSC" id="RGD:69335">
    <property type="organism name" value="rat"/>
</dbReference>
<dbReference type="AGR" id="RGD:69335"/>
<dbReference type="CTD" id="55503"/>
<dbReference type="RGD" id="69335">
    <property type="gene designation" value="Trpv6"/>
</dbReference>
<dbReference type="eggNOG" id="KOG3676">
    <property type="taxonomic scope" value="Eukaryota"/>
</dbReference>
<dbReference type="InParanoid" id="Q9R186"/>
<dbReference type="Reactome" id="R-RNO-3295583">
    <property type="pathway name" value="TRP channels"/>
</dbReference>
<dbReference type="PRO" id="PR:Q9R186"/>
<dbReference type="Proteomes" id="UP000002494">
    <property type="component" value="Unplaced"/>
</dbReference>
<dbReference type="GO" id="GO:0016324">
    <property type="term" value="C:apical plasma membrane"/>
    <property type="evidence" value="ECO:0000305"/>
    <property type="project" value="RGD"/>
</dbReference>
<dbReference type="GO" id="GO:0034704">
    <property type="term" value="C:calcium channel complex"/>
    <property type="evidence" value="ECO:0000266"/>
    <property type="project" value="RGD"/>
</dbReference>
<dbReference type="GO" id="GO:0005886">
    <property type="term" value="C:plasma membrane"/>
    <property type="evidence" value="ECO:0000250"/>
    <property type="project" value="UniProtKB"/>
</dbReference>
<dbReference type="GO" id="GO:0005262">
    <property type="term" value="F:calcium channel activity"/>
    <property type="evidence" value="ECO:0000314"/>
    <property type="project" value="UniProtKB"/>
</dbReference>
<dbReference type="GO" id="GO:0005227">
    <property type="term" value="F:calcium-activated cation channel activity"/>
    <property type="evidence" value="ECO:0000304"/>
    <property type="project" value="RGD"/>
</dbReference>
<dbReference type="GO" id="GO:0005516">
    <property type="term" value="F:calmodulin binding"/>
    <property type="evidence" value="ECO:0000250"/>
    <property type="project" value="UniProtKB"/>
</dbReference>
<dbReference type="GO" id="GO:0042802">
    <property type="term" value="F:identical protein binding"/>
    <property type="evidence" value="ECO:0000353"/>
    <property type="project" value="IntAct"/>
</dbReference>
<dbReference type="GO" id="GO:0046872">
    <property type="term" value="F:metal ion binding"/>
    <property type="evidence" value="ECO:0007669"/>
    <property type="project" value="UniProtKB-KW"/>
</dbReference>
<dbReference type="GO" id="GO:0055074">
    <property type="term" value="P:calcium ion homeostasis"/>
    <property type="evidence" value="ECO:0000250"/>
    <property type="project" value="UniProtKB"/>
</dbReference>
<dbReference type="GO" id="GO:0070509">
    <property type="term" value="P:calcium ion import"/>
    <property type="evidence" value="ECO:0000314"/>
    <property type="project" value="RGD"/>
</dbReference>
<dbReference type="GO" id="GO:0098703">
    <property type="term" value="P:calcium ion import across plasma membrane"/>
    <property type="evidence" value="ECO:0000315"/>
    <property type="project" value="UniProtKB"/>
</dbReference>
<dbReference type="GO" id="GO:0070588">
    <property type="term" value="P:calcium ion transmembrane transport"/>
    <property type="evidence" value="ECO:0000314"/>
    <property type="project" value="UniProtKB"/>
</dbReference>
<dbReference type="GO" id="GO:0006816">
    <property type="term" value="P:calcium ion transport"/>
    <property type="evidence" value="ECO:0000266"/>
    <property type="project" value="RGD"/>
</dbReference>
<dbReference type="GO" id="GO:0035898">
    <property type="term" value="P:parathyroid hormone secretion"/>
    <property type="evidence" value="ECO:0000266"/>
    <property type="project" value="RGD"/>
</dbReference>
<dbReference type="GO" id="GO:0051289">
    <property type="term" value="P:protein homotetramerization"/>
    <property type="evidence" value="ECO:0000353"/>
    <property type="project" value="UniProtKB"/>
</dbReference>
<dbReference type="GO" id="GO:0051592">
    <property type="term" value="P:response to calcium ion"/>
    <property type="evidence" value="ECO:0000250"/>
    <property type="project" value="UniProtKB"/>
</dbReference>
<dbReference type="CDD" id="cd22192">
    <property type="entry name" value="TRPV5-6"/>
    <property type="match status" value="1"/>
</dbReference>
<dbReference type="FunFam" id="1.25.40.20:FF:000143">
    <property type="entry name" value="transient receptor potential cation channel subfamily V member 5"/>
    <property type="match status" value="1"/>
</dbReference>
<dbReference type="FunFam" id="1.25.40.20:FF:000230">
    <property type="entry name" value="transient receptor potential cation channel subfamily V member 6"/>
    <property type="match status" value="1"/>
</dbReference>
<dbReference type="Gene3D" id="1.25.40.20">
    <property type="entry name" value="Ankyrin repeat-containing domain"/>
    <property type="match status" value="1"/>
</dbReference>
<dbReference type="InterPro" id="IPR002110">
    <property type="entry name" value="Ankyrin_rpt"/>
</dbReference>
<dbReference type="InterPro" id="IPR036770">
    <property type="entry name" value="Ankyrin_rpt-contain_sf"/>
</dbReference>
<dbReference type="InterPro" id="IPR005821">
    <property type="entry name" value="Ion_trans_dom"/>
</dbReference>
<dbReference type="InterPro" id="IPR024862">
    <property type="entry name" value="TRPV"/>
</dbReference>
<dbReference type="InterPro" id="IPR008344">
    <property type="entry name" value="TRPV5/TRPV6"/>
</dbReference>
<dbReference type="InterPro" id="IPR008345">
    <property type="entry name" value="TrpV6"/>
</dbReference>
<dbReference type="NCBIfam" id="TIGR00870">
    <property type="entry name" value="trp"/>
    <property type="match status" value="1"/>
</dbReference>
<dbReference type="PANTHER" id="PTHR10582:SF25">
    <property type="entry name" value="TRANSIENT RECEPTOR POTENTIAL CATION CHANNEL SUBFAMILY V MEMBER 6"/>
    <property type="match status" value="1"/>
</dbReference>
<dbReference type="PANTHER" id="PTHR10582">
    <property type="entry name" value="TRANSIENT RECEPTOR POTENTIAL ION CHANNEL PROTEIN"/>
    <property type="match status" value="1"/>
</dbReference>
<dbReference type="Pfam" id="PF12796">
    <property type="entry name" value="Ank_2"/>
    <property type="match status" value="2"/>
</dbReference>
<dbReference type="Pfam" id="PF00520">
    <property type="entry name" value="Ion_trans"/>
    <property type="match status" value="1"/>
</dbReference>
<dbReference type="PRINTS" id="PR01415">
    <property type="entry name" value="ANKYRIN"/>
</dbReference>
<dbReference type="PRINTS" id="PR01765">
    <property type="entry name" value="ECACCHANNEL"/>
</dbReference>
<dbReference type="PRINTS" id="PR01766">
    <property type="entry name" value="ECACCHANNEL1"/>
</dbReference>
<dbReference type="SMART" id="SM00248">
    <property type="entry name" value="ANK"/>
    <property type="match status" value="5"/>
</dbReference>
<dbReference type="SUPFAM" id="SSF48403">
    <property type="entry name" value="Ankyrin repeat"/>
    <property type="match status" value="1"/>
</dbReference>
<dbReference type="PROSITE" id="PS50297">
    <property type="entry name" value="ANK_REP_REGION"/>
    <property type="match status" value="1"/>
</dbReference>
<dbReference type="PROSITE" id="PS50088">
    <property type="entry name" value="ANK_REPEAT"/>
    <property type="match status" value="2"/>
</dbReference>
<gene>
    <name type="primary">Trpv6</name>
</gene>
<sequence length="767" mass="87362">MGPLQREGRPALGDANVAPGSSPGGVWHQPQPPKDSAFHPMGWSLPKEKGLILCLWNKFCRWFHRRESWAQSRDEQNLLQQKRIWESPLLLAAKENNVQALIKLLKFEGCEVHQKGAMGETALHIAALYDNLEAAMVLMEAAPELVFEPMTSELYEGQTALHIAVINQNVNLVRALLARGASVSARATGSVFHYRPHNLIYYGEHPLSFAACVGSEEIVRLLIEHGADIRAQDSLGNTVLHILILQPNKTFACQMYNLLLSYDGGDHLKSLELVPNNQGLTPFKLAGVEGNIVMFQHLMQKRKHIQWTYGPLTSTLYDLTEIDSSGDDQSLLELIVTTKKREARQILDQTPVKELVSLKWKRYGRPYFCVLGAIYVLYIICFTMCCVYRPLKPRITNRTNPRDNTLLQQKLLQEAYVTPKDDLRLVGELVSIVGAVIILLVEIPDIFRLGVTRFFGQTILGGPFHVIIVTYAFMVLVTMVMRLTNSDGEVVPMSFALVLGWCNVMYFARGFQMLGPFTIMIQKMIFGDLMRFCWLMAVVILGFASAFYIIFQTEDPDELGHFYDYPMALFSTFELFLTIIDGPANYDVDLPFMYSITYAAFAIIATLLMLNLLIAMMGDTHWRVAHERDELWRAQVVATTVMLERKLPRCLWPRSGICGREYGLGDRWFLRVEDRQDLNRQRIRRYAQAFQQQDDLYSEDLEKDSGEKLEMARPFGAYLSFPTPSVSRSTSRSSTNWDRLRQGALRKDLQGIINRGLEDGEGWEYQI</sequence>
<evidence type="ECO:0000250" key="1">
    <source>
        <dbReference type="UniProtKB" id="Q91WD2"/>
    </source>
</evidence>
<evidence type="ECO:0000250" key="2">
    <source>
        <dbReference type="UniProtKB" id="Q9H1D0"/>
    </source>
</evidence>
<evidence type="ECO:0000255" key="3"/>
<evidence type="ECO:0000256" key="4">
    <source>
        <dbReference type="SAM" id="MobiDB-lite"/>
    </source>
</evidence>
<evidence type="ECO:0000269" key="5">
    <source>
    </source>
</evidence>
<evidence type="ECO:0000269" key="6">
    <source>
    </source>
</evidence>
<evidence type="ECO:0000269" key="7">
    <source>
    </source>
</evidence>
<evidence type="ECO:0000269" key="8">
    <source>
    </source>
</evidence>
<evidence type="ECO:0000269" key="9">
    <source>
    </source>
</evidence>
<evidence type="ECO:0000269" key="10">
    <source>
    </source>
</evidence>
<evidence type="ECO:0000303" key="11">
    <source>
    </source>
</evidence>
<evidence type="ECO:0000303" key="12">
    <source>
    </source>
</evidence>
<evidence type="ECO:0000305" key="13"/>
<evidence type="ECO:0007744" key="14">
    <source>
        <dbReference type="PDB" id="5IWK"/>
    </source>
</evidence>
<evidence type="ECO:0007744" key="15">
    <source>
        <dbReference type="PDB" id="5IWP"/>
    </source>
</evidence>
<evidence type="ECO:0007744" key="16">
    <source>
        <dbReference type="PDB" id="5IWR"/>
    </source>
</evidence>
<evidence type="ECO:0007744" key="17">
    <source>
        <dbReference type="PDB" id="5IWT"/>
    </source>
</evidence>
<evidence type="ECO:0007744" key="18">
    <source>
        <dbReference type="PDB" id="5WO6"/>
    </source>
</evidence>
<evidence type="ECO:0007744" key="19">
    <source>
        <dbReference type="PDB" id="5WO7"/>
    </source>
</evidence>
<evidence type="ECO:0007744" key="20">
    <source>
        <dbReference type="PDB" id="5WO8"/>
    </source>
</evidence>
<evidence type="ECO:0007744" key="21">
    <source>
        <dbReference type="PDB" id="5WO9"/>
    </source>
</evidence>
<evidence type="ECO:0007744" key="22">
    <source>
        <dbReference type="PDB" id="5WOA"/>
    </source>
</evidence>
<evidence type="ECO:0007744" key="23">
    <source>
        <dbReference type="PDB" id="6BOB"/>
    </source>
</evidence>
<evidence type="ECO:0007829" key="24">
    <source>
        <dbReference type="PDB" id="5IWK"/>
    </source>
</evidence>
<evidence type="ECO:0007829" key="25">
    <source>
        <dbReference type="PDB" id="5WO6"/>
    </source>
</evidence>
<evidence type="ECO:0007829" key="26">
    <source>
        <dbReference type="PDB" id="5WO7"/>
    </source>
</evidence>
<evidence type="ECO:0007829" key="27">
    <source>
        <dbReference type="PDB" id="5WO8"/>
    </source>
</evidence>
<evidence type="ECO:0007829" key="28">
    <source>
        <dbReference type="PDB" id="6D7P"/>
    </source>
</evidence>